<reference key="1">
    <citation type="journal article" date="2000" name="Nature">
        <title>Sequence and analysis of chromosome 3 of the plant Arabidopsis thaliana.</title>
        <authorList>
            <person name="Salanoubat M."/>
            <person name="Lemcke K."/>
            <person name="Rieger M."/>
            <person name="Ansorge W."/>
            <person name="Unseld M."/>
            <person name="Fartmann B."/>
            <person name="Valle G."/>
            <person name="Bloecker H."/>
            <person name="Perez-Alonso M."/>
            <person name="Obermaier B."/>
            <person name="Delseny M."/>
            <person name="Boutry M."/>
            <person name="Grivell L.A."/>
            <person name="Mache R."/>
            <person name="Puigdomenech P."/>
            <person name="De Simone V."/>
            <person name="Choisne N."/>
            <person name="Artiguenave F."/>
            <person name="Robert C."/>
            <person name="Brottier P."/>
            <person name="Wincker P."/>
            <person name="Cattolico L."/>
            <person name="Weissenbach J."/>
            <person name="Saurin W."/>
            <person name="Quetier F."/>
            <person name="Schaefer M."/>
            <person name="Mueller-Auer S."/>
            <person name="Gabel C."/>
            <person name="Fuchs M."/>
            <person name="Benes V."/>
            <person name="Wurmbach E."/>
            <person name="Drzonek H."/>
            <person name="Erfle H."/>
            <person name="Jordan N."/>
            <person name="Bangert S."/>
            <person name="Wiedelmann R."/>
            <person name="Kranz H."/>
            <person name="Voss H."/>
            <person name="Holland R."/>
            <person name="Brandt P."/>
            <person name="Nyakatura G."/>
            <person name="Vezzi A."/>
            <person name="D'Angelo M."/>
            <person name="Pallavicini A."/>
            <person name="Toppo S."/>
            <person name="Simionati B."/>
            <person name="Conrad A."/>
            <person name="Hornischer K."/>
            <person name="Kauer G."/>
            <person name="Loehnert T.-H."/>
            <person name="Nordsiek G."/>
            <person name="Reichelt J."/>
            <person name="Scharfe M."/>
            <person name="Schoen O."/>
            <person name="Bargues M."/>
            <person name="Terol J."/>
            <person name="Climent J."/>
            <person name="Navarro P."/>
            <person name="Collado C."/>
            <person name="Perez-Perez A."/>
            <person name="Ottenwaelder B."/>
            <person name="Duchemin D."/>
            <person name="Cooke R."/>
            <person name="Laudie M."/>
            <person name="Berger-Llauro C."/>
            <person name="Purnelle B."/>
            <person name="Masuy D."/>
            <person name="de Haan M."/>
            <person name="Maarse A.C."/>
            <person name="Alcaraz J.-P."/>
            <person name="Cottet A."/>
            <person name="Casacuberta E."/>
            <person name="Monfort A."/>
            <person name="Argiriou A."/>
            <person name="Flores M."/>
            <person name="Liguori R."/>
            <person name="Vitale D."/>
            <person name="Mannhaupt G."/>
            <person name="Haase D."/>
            <person name="Schoof H."/>
            <person name="Rudd S."/>
            <person name="Zaccaria P."/>
            <person name="Mewes H.-W."/>
            <person name="Mayer K.F.X."/>
            <person name="Kaul S."/>
            <person name="Town C.D."/>
            <person name="Koo H.L."/>
            <person name="Tallon L.J."/>
            <person name="Jenkins J."/>
            <person name="Rooney T."/>
            <person name="Rizzo M."/>
            <person name="Walts A."/>
            <person name="Utterback T."/>
            <person name="Fujii C.Y."/>
            <person name="Shea T.P."/>
            <person name="Creasy T.H."/>
            <person name="Haas B."/>
            <person name="Maiti R."/>
            <person name="Wu D."/>
            <person name="Peterson J."/>
            <person name="Van Aken S."/>
            <person name="Pai G."/>
            <person name="Militscher J."/>
            <person name="Sellers P."/>
            <person name="Gill J.E."/>
            <person name="Feldblyum T.V."/>
            <person name="Preuss D."/>
            <person name="Lin X."/>
            <person name="Nierman W.C."/>
            <person name="Salzberg S.L."/>
            <person name="White O."/>
            <person name="Venter J.C."/>
            <person name="Fraser C.M."/>
            <person name="Kaneko T."/>
            <person name="Nakamura Y."/>
            <person name="Sato S."/>
            <person name="Kato T."/>
            <person name="Asamizu E."/>
            <person name="Sasamoto S."/>
            <person name="Kimura T."/>
            <person name="Idesawa K."/>
            <person name="Kawashima K."/>
            <person name="Kishida Y."/>
            <person name="Kiyokawa C."/>
            <person name="Kohara M."/>
            <person name="Matsumoto M."/>
            <person name="Matsuno A."/>
            <person name="Muraki A."/>
            <person name="Nakayama S."/>
            <person name="Nakazaki N."/>
            <person name="Shinpo S."/>
            <person name="Takeuchi C."/>
            <person name="Wada T."/>
            <person name="Watanabe A."/>
            <person name="Yamada M."/>
            <person name="Yasuda M."/>
            <person name="Tabata S."/>
        </authorList>
    </citation>
    <scope>NUCLEOTIDE SEQUENCE [LARGE SCALE GENOMIC DNA]</scope>
    <source>
        <strain>cv. Columbia</strain>
    </source>
</reference>
<reference key="2">
    <citation type="journal article" date="2017" name="Plant J.">
        <title>Araport11: a complete reannotation of the Arabidopsis thaliana reference genome.</title>
        <authorList>
            <person name="Cheng C.Y."/>
            <person name="Krishnakumar V."/>
            <person name="Chan A.P."/>
            <person name="Thibaud-Nissen F."/>
            <person name="Schobel S."/>
            <person name="Town C.D."/>
        </authorList>
    </citation>
    <scope>GENOME REANNOTATION</scope>
    <source>
        <strain>cv. Columbia</strain>
    </source>
</reference>
<reference key="3">
    <citation type="journal article" date="2003" name="Science">
        <title>Empirical analysis of transcriptional activity in the Arabidopsis genome.</title>
        <authorList>
            <person name="Yamada K."/>
            <person name="Lim J."/>
            <person name="Dale J.M."/>
            <person name="Chen H."/>
            <person name="Shinn P."/>
            <person name="Palm C.J."/>
            <person name="Southwick A.M."/>
            <person name="Wu H.C."/>
            <person name="Kim C.J."/>
            <person name="Nguyen M."/>
            <person name="Pham P.K."/>
            <person name="Cheuk R.F."/>
            <person name="Karlin-Newmann G."/>
            <person name="Liu S.X."/>
            <person name="Lam B."/>
            <person name="Sakano H."/>
            <person name="Wu T."/>
            <person name="Yu G."/>
            <person name="Miranda M."/>
            <person name="Quach H.L."/>
            <person name="Tripp M."/>
            <person name="Chang C.H."/>
            <person name="Lee J.M."/>
            <person name="Toriumi M.J."/>
            <person name="Chan M.M."/>
            <person name="Tang C.C."/>
            <person name="Onodera C.S."/>
            <person name="Deng J.M."/>
            <person name="Akiyama K."/>
            <person name="Ansari Y."/>
            <person name="Arakawa T."/>
            <person name="Banh J."/>
            <person name="Banno F."/>
            <person name="Bowser L."/>
            <person name="Brooks S.Y."/>
            <person name="Carninci P."/>
            <person name="Chao Q."/>
            <person name="Choy N."/>
            <person name="Enju A."/>
            <person name="Goldsmith A.D."/>
            <person name="Gurjal M."/>
            <person name="Hansen N.F."/>
            <person name="Hayashizaki Y."/>
            <person name="Johnson-Hopson C."/>
            <person name="Hsuan V.W."/>
            <person name="Iida K."/>
            <person name="Karnes M."/>
            <person name="Khan S."/>
            <person name="Koesema E."/>
            <person name="Ishida J."/>
            <person name="Jiang P.X."/>
            <person name="Jones T."/>
            <person name="Kawai J."/>
            <person name="Kamiya A."/>
            <person name="Meyers C."/>
            <person name="Nakajima M."/>
            <person name="Narusaka M."/>
            <person name="Seki M."/>
            <person name="Sakurai T."/>
            <person name="Satou M."/>
            <person name="Tamse R."/>
            <person name="Vaysberg M."/>
            <person name="Wallender E.K."/>
            <person name="Wong C."/>
            <person name="Yamamura Y."/>
            <person name="Yuan S."/>
            <person name="Shinozaki K."/>
            <person name="Davis R.W."/>
            <person name="Theologis A."/>
            <person name="Ecker J.R."/>
        </authorList>
    </citation>
    <scope>NUCLEOTIDE SEQUENCE [LARGE SCALE MRNA]</scope>
    <source>
        <strain>cv. Columbia</strain>
    </source>
</reference>
<reference key="4">
    <citation type="journal article" date="2001" name="J. Biol. Chem.">
        <title>The Arabidopsis thaliana ABC protein superfamily, a complete inventory.</title>
        <authorList>
            <person name="Sanchez-Fernandez R."/>
            <person name="Davies T.G."/>
            <person name="Coleman J.O."/>
            <person name="Rea P.A."/>
        </authorList>
    </citation>
    <scope>GENE FAMILY</scope>
    <scope>NOMENCLATURE</scope>
</reference>
<reference key="5">
    <citation type="journal article" date="2008" name="Trends Plant Sci.">
        <title>Plant ABC proteins - a unified nomenclature and updated inventory.</title>
        <authorList>
            <person name="Verrier P.J."/>
            <person name="Bird D."/>
            <person name="Burla B."/>
            <person name="Dassa E."/>
            <person name="Forestier C."/>
            <person name="Geisler M."/>
            <person name="Klein M."/>
            <person name="Kolukisaoglu H.U."/>
            <person name="Lee Y."/>
            <person name="Martinoia E."/>
            <person name="Murphy A."/>
            <person name="Rea P.A."/>
            <person name="Samuels L."/>
            <person name="Schulz B."/>
            <person name="Spalding E.J."/>
            <person name="Yazaki K."/>
            <person name="Theodoulou F.L."/>
        </authorList>
    </citation>
    <scope>GENE FAMILY</scope>
    <scope>NOMENCLATURE</scope>
</reference>
<sequence length="983" mass="108688">MTLQRGLPLLLQQYTALFKKNLLLSWRSKRATFLQLFASFFFILLIFCIQAAMEKSFASSTALKTVTDPTALISPPIPPCEDKFFVNLPCYDFVWSGNRSSKVTQIVNAIMKNNPGRSIPIEKVRSFVDPEAVDTWLMANPLLVPGALHFIERNATVISYGIQTNSTPEMNRGRFEDPTFKFQIPLQIAAEREIARSLIGDPNFNWVVGFKEFPHPTIEAIVALDTIGPTFFLAVAMFGFVLQISSLITEKELKLRQAMTMMGVFDTAYWLSWLTWEGILTAISALLTVLFGMMFQFDFFLKNSFPVVFLLFMLFQFNLIGLAFMLSAFISKSTSATTVGFFVFLVGFVTQLATSSGFPYAKKYSRMIRALWSLFPPNTFSQGLKLLADATSTPQDPGISWSKRAECGPNDDTGCVLTINDIYLWLLGTFFLWFVLALYFDNITPNASGVRKSIFYFLKPGYWTGKGGNRVEEGGICSCIGSVPPVDHITPDDEDVLEEETLVKQHSMEGLVDPNVAVQIRGLAKTYPGTTKFGCCKCKKTSPFHALKGLWMNIAKDQLFCLLGPNGAGKTTTINCLTGLFPVTGGDALIYGNSIRSSVGMSNIRKMIGVCPQFDILWDALSGEEHLKLFASIKGLPPSSINSMVEKSLAEVKLTEAGKIRAGSYSGGMKRRLSVAVSLIGDPKLVFLDEPTTGMDPITRRHVWDIIQETKKGRAIILTTHSMEEADILSDRIGIMAKGRLRCIGTSIRLKSRFGTGFIANISFVESNNHNGEAGSDSREPVKKFFKDHLKVKPIEENKAFMTFVIPHDKENLLTSFFAELQDREEEFGISDIQLGLATLEEVFLNIARKAELESAAVDGTMVTLDLTSGSSVEIPVGARFIGIPGTETAENPRGVMVEVYWQQDESGSLCISGHSTEMPIPENIPVTDPVAPGHGGVNLLGRRGRRQVQGIVIDPEFATFTRSGSTSSRRFSRSGSSRRFSS</sequence>
<gene>
    <name type="primary">ABCA2</name>
    <name type="synonym">ATH1</name>
    <name type="ordered locus">At3g47730</name>
    <name type="ORF">T23J7.60</name>
</gene>
<feature type="chain" id="PRO_0000240323" description="ABC transporter A family member 2">
    <location>
        <begin position="1"/>
        <end position="983"/>
    </location>
</feature>
<feature type="transmembrane region" description="Helical" evidence="1">
    <location>
        <begin position="33"/>
        <end position="53"/>
    </location>
</feature>
<feature type="transmembrane region" description="Helical" evidence="1">
    <location>
        <begin position="221"/>
        <end position="241"/>
    </location>
</feature>
<feature type="transmembrane region" description="Helical" evidence="1">
    <location>
        <begin position="279"/>
        <end position="299"/>
    </location>
</feature>
<feature type="transmembrane region" description="Helical" evidence="1">
    <location>
        <begin position="305"/>
        <end position="325"/>
    </location>
</feature>
<feature type="transmembrane region" description="Helical" evidence="1">
    <location>
        <begin position="339"/>
        <end position="359"/>
    </location>
</feature>
<feature type="transmembrane region" description="Helical" evidence="1">
    <location>
        <begin position="416"/>
        <end position="436"/>
    </location>
</feature>
<feature type="domain" description="ABC transporter" evidence="2">
    <location>
        <begin position="518"/>
        <end position="763"/>
    </location>
</feature>
<feature type="region of interest" description="Disordered" evidence="3">
    <location>
        <begin position="963"/>
        <end position="983"/>
    </location>
</feature>
<feature type="binding site" evidence="2">
    <location>
        <begin position="564"/>
        <end position="571"/>
    </location>
    <ligand>
        <name>ATP</name>
        <dbReference type="ChEBI" id="CHEBI:30616"/>
    </ligand>
</feature>
<comment type="subcellular location">
    <subcellularLocation>
        <location evidence="4">Membrane</location>
        <topology evidence="4">Multi-pass membrane protein</topology>
    </subcellularLocation>
</comment>
<comment type="similarity">
    <text evidence="4">Belongs to the ABC transporter superfamily. ABCA family. CPR flippase (TC 3.A.1.211) subfamily.</text>
</comment>
<comment type="sequence caution" evidence="4">
    <conflict type="erroneous gene model prediction">
        <sequence resource="EMBL-CDS" id="CAB41856"/>
    </conflict>
</comment>
<protein>
    <recommendedName>
        <fullName>ABC transporter A family member 2</fullName>
        <shortName>ABC transporter ABCA.2</shortName>
        <shortName>AtABCA2</shortName>
    </recommendedName>
    <alternativeName>
        <fullName>ABC2 homolog 1</fullName>
    </alternativeName>
</protein>
<proteinExistence type="evidence at transcript level"/>
<evidence type="ECO:0000255" key="1"/>
<evidence type="ECO:0000255" key="2">
    <source>
        <dbReference type="PROSITE-ProRule" id="PRU00434"/>
    </source>
</evidence>
<evidence type="ECO:0000256" key="3">
    <source>
        <dbReference type="SAM" id="MobiDB-lite"/>
    </source>
</evidence>
<evidence type="ECO:0000305" key="4"/>
<accession>Q84K47</accession>
<accession>Q9STU0</accession>
<keyword id="KW-0067">ATP-binding</keyword>
<keyword id="KW-0472">Membrane</keyword>
<keyword id="KW-0547">Nucleotide-binding</keyword>
<keyword id="KW-1185">Reference proteome</keyword>
<keyword id="KW-0812">Transmembrane</keyword>
<keyword id="KW-1133">Transmembrane helix</keyword>
<keyword id="KW-0813">Transport</keyword>
<organism>
    <name type="scientific">Arabidopsis thaliana</name>
    <name type="common">Mouse-ear cress</name>
    <dbReference type="NCBI Taxonomy" id="3702"/>
    <lineage>
        <taxon>Eukaryota</taxon>
        <taxon>Viridiplantae</taxon>
        <taxon>Streptophyta</taxon>
        <taxon>Embryophyta</taxon>
        <taxon>Tracheophyta</taxon>
        <taxon>Spermatophyta</taxon>
        <taxon>Magnoliopsida</taxon>
        <taxon>eudicotyledons</taxon>
        <taxon>Gunneridae</taxon>
        <taxon>Pentapetalae</taxon>
        <taxon>rosids</taxon>
        <taxon>malvids</taxon>
        <taxon>Brassicales</taxon>
        <taxon>Brassicaceae</taxon>
        <taxon>Camelineae</taxon>
        <taxon>Arabidopsis</taxon>
    </lineage>
</organism>
<dbReference type="EMBL" id="AL049746">
    <property type="protein sequence ID" value="CAB41856.1"/>
    <property type="status" value="ALT_SEQ"/>
    <property type="molecule type" value="Genomic_DNA"/>
</dbReference>
<dbReference type="EMBL" id="CP002686">
    <property type="protein sequence ID" value="AEE78323.1"/>
    <property type="molecule type" value="Genomic_DNA"/>
</dbReference>
<dbReference type="EMBL" id="BT004197">
    <property type="protein sequence ID" value="AAO42215.1"/>
    <property type="molecule type" value="mRNA"/>
</dbReference>
<dbReference type="EMBL" id="BT005456">
    <property type="protein sequence ID" value="AAO63876.1"/>
    <property type="molecule type" value="mRNA"/>
</dbReference>
<dbReference type="PIR" id="T07712">
    <property type="entry name" value="T07712"/>
</dbReference>
<dbReference type="RefSeq" id="NP_190357.2">
    <property type="nucleotide sequence ID" value="NM_114641.4"/>
</dbReference>
<dbReference type="SMR" id="Q84K47"/>
<dbReference type="FunCoup" id="Q84K47">
    <property type="interactions" value="62"/>
</dbReference>
<dbReference type="STRING" id="3702.Q84K47"/>
<dbReference type="iPTMnet" id="Q84K47"/>
<dbReference type="SwissPalm" id="Q84K47"/>
<dbReference type="PaxDb" id="3702-AT3G47730.1"/>
<dbReference type="ProteomicsDB" id="245092"/>
<dbReference type="EnsemblPlants" id="AT3G47730.1">
    <property type="protein sequence ID" value="AT3G47730.1"/>
    <property type="gene ID" value="AT3G47730"/>
</dbReference>
<dbReference type="GeneID" id="823927"/>
<dbReference type="Gramene" id="AT3G47730.1">
    <property type="protein sequence ID" value="AT3G47730.1"/>
    <property type="gene ID" value="AT3G47730"/>
</dbReference>
<dbReference type="KEGG" id="ath:AT3G47730"/>
<dbReference type="Araport" id="AT3G47730"/>
<dbReference type="TAIR" id="AT3G47730">
    <property type="gene designation" value="ABCA2"/>
</dbReference>
<dbReference type="eggNOG" id="KOG0059">
    <property type="taxonomic scope" value="Eukaryota"/>
</dbReference>
<dbReference type="HOGENOM" id="CLU_000604_19_5_1"/>
<dbReference type="InParanoid" id="Q84K47"/>
<dbReference type="OMA" id="RTIWSLF"/>
<dbReference type="PhylomeDB" id="Q84K47"/>
<dbReference type="BioCyc" id="ARA:AT3G47730-MONOMER"/>
<dbReference type="PRO" id="PR:Q84K47"/>
<dbReference type="Proteomes" id="UP000006548">
    <property type="component" value="Chromosome 3"/>
</dbReference>
<dbReference type="ExpressionAtlas" id="Q84K47">
    <property type="expression patterns" value="baseline and differential"/>
</dbReference>
<dbReference type="GO" id="GO:0016020">
    <property type="term" value="C:membrane"/>
    <property type="evidence" value="ECO:0007669"/>
    <property type="project" value="UniProtKB-SubCell"/>
</dbReference>
<dbReference type="GO" id="GO:0140359">
    <property type="term" value="F:ABC-type transporter activity"/>
    <property type="evidence" value="ECO:0007669"/>
    <property type="project" value="InterPro"/>
</dbReference>
<dbReference type="GO" id="GO:0005524">
    <property type="term" value="F:ATP binding"/>
    <property type="evidence" value="ECO:0007669"/>
    <property type="project" value="UniProtKB-KW"/>
</dbReference>
<dbReference type="GO" id="GO:0016887">
    <property type="term" value="F:ATP hydrolysis activity"/>
    <property type="evidence" value="ECO:0007669"/>
    <property type="project" value="InterPro"/>
</dbReference>
<dbReference type="CDD" id="cd03263">
    <property type="entry name" value="ABC_subfamily_A"/>
    <property type="match status" value="1"/>
</dbReference>
<dbReference type="FunFam" id="3.40.50.300:FF:000665">
    <property type="entry name" value="ABC transporter A family member 2"/>
    <property type="match status" value="1"/>
</dbReference>
<dbReference type="Gene3D" id="3.40.50.300">
    <property type="entry name" value="P-loop containing nucleotide triphosphate hydrolases"/>
    <property type="match status" value="1"/>
</dbReference>
<dbReference type="InterPro" id="IPR003593">
    <property type="entry name" value="AAA+_ATPase"/>
</dbReference>
<dbReference type="InterPro" id="IPR013525">
    <property type="entry name" value="ABC2_TM"/>
</dbReference>
<dbReference type="InterPro" id="IPR003439">
    <property type="entry name" value="ABC_transporter-like_ATP-bd"/>
</dbReference>
<dbReference type="InterPro" id="IPR017871">
    <property type="entry name" value="ABC_transporter-like_CS"/>
</dbReference>
<dbReference type="InterPro" id="IPR026082">
    <property type="entry name" value="ABCA"/>
</dbReference>
<dbReference type="InterPro" id="IPR056788">
    <property type="entry name" value="ABCA2/9/11_C"/>
</dbReference>
<dbReference type="InterPro" id="IPR027417">
    <property type="entry name" value="P-loop_NTPase"/>
</dbReference>
<dbReference type="PANTHER" id="PTHR19229:SF205">
    <property type="entry name" value="ABC TRANSPORTER A FAMILY MEMBER 1-RELATED"/>
    <property type="match status" value="1"/>
</dbReference>
<dbReference type="PANTHER" id="PTHR19229">
    <property type="entry name" value="ATP-BINDING CASSETTE TRANSPORTER SUBFAMILY A ABCA"/>
    <property type="match status" value="1"/>
</dbReference>
<dbReference type="Pfam" id="PF12698">
    <property type="entry name" value="ABC2_membrane_3"/>
    <property type="match status" value="1"/>
</dbReference>
<dbReference type="Pfam" id="PF00005">
    <property type="entry name" value="ABC_tran"/>
    <property type="match status" value="1"/>
</dbReference>
<dbReference type="Pfam" id="PF25158">
    <property type="entry name" value="ABCA11_C"/>
    <property type="match status" value="1"/>
</dbReference>
<dbReference type="SMART" id="SM00382">
    <property type="entry name" value="AAA"/>
    <property type="match status" value="1"/>
</dbReference>
<dbReference type="SUPFAM" id="SSF52540">
    <property type="entry name" value="P-loop containing nucleoside triphosphate hydrolases"/>
    <property type="match status" value="1"/>
</dbReference>
<dbReference type="PROSITE" id="PS00211">
    <property type="entry name" value="ABC_TRANSPORTER_1"/>
    <property type="match status" value="1"/>
</dbReference>
<dbReference type="PROSITE" id="PS50893">
    <property type="entry name" value="ABC_TRANSPORTER_2"/>
    <property type="match status" value="1"/>
</dbReference>
<name>AB2A_ARATH</name>